<protein>
    <recommendedName>
        <fullName evidence="1">Phosphomethylpyrimidine synthase</fullName>
        <ecNumber evidence="1">4.1.99.17</ecNumber>
    </recommendedName>
    <alternativeName>
        <fullName evidence="1">Hydroxymethylpyrimidine phosphate synthase</fullName>
        <shortName evidence="1">HMP-P synthase</shortName>
        <shortName evidence="1">HMP-phosphate synthase</shortName>
        <shortName evidence="1">HMPP synthase</shortName>
    </alternativeName>
    <alternativeName>
        <fullName evidence="1">Thiamine biosynthesis protein ThiC</fullName>
    </alternativeName>
</protein>
<gene>
    <name evidence="1" type="primary">thiC</name>
    <name type="ordered locus">VV1_0964</name>
</gene>
<organism>
    <name type="scientific">Vibrio vulnificus (strain CMCP6)</name>
    <dbReference type="NCBI Taxonomy" id="216895"/>
    <lineage>
        <taxon>Bacteria</taxon>
        <taxon>Pseudomonadati</taxon>
        <taxon>Pseudomonadota</taxon>
        <taxon>Gammaproteobacteria</taxon>
        <taxon>Vibrionales</taxon>
        <taxon>Vibrionaceae</taxon>
        <taxon>Vibrio</taxon>
    </lineage>
</organism>
<keyword id="KW-0004">4Fe-4S</keyword>
<keyword id="KW-0408">Iron</keyword>
<keyword id="KW-0411">Iron-sulfur</keyword>
<keyword id="KW-0456">Lyase</keyword>
<keyword id="KW-0479">Metal-binding</keyword>
<keyword id="KW-0949">S-adenosyl-L-methionine</keyword>
<keyword id="KW-0784">Thiamine biosynthesis</keyword>
<keyword id="KW-0862">Zinc</keyword>
<reference key="1">
    <citation type="submission" date="2002-12" db="EMBL/GenBank/DDBJ databases">
        <title>Complete genome sequence of Vibrio vulnificus CMCP6.</title>
        <authorList>
            <person name="Rhee J.H."/>
            <person name="Kim S.Y."/>
            <person name="Chung S.S."/>
            <person name="Kim J.J."/>
            <person name="Moon Y.H."/>
            <person name="Jeong H."/>
            <person name="Choy H.E."/>
        </authorList>
    </citation>
    <scope>NUCLEOTIDE SEQUENCE [LARGE SCALE GENOMIC DNA]</scope>
    <source>
        <strain>CMCP6</strain>
    </source>
</reference>
<feature type="chain" id="PRO_0000152847" description="Phosphomethylpyrimidine synthase">
    <location>
        <begin position="1"/>
        <end position="647"/>
    </location>
</feature>
<feature type="region of interest" description="Disordered" evidence="2">
    <location>
        <begin position="623"/>
        <end position="647"/>
    </location>
</feature>
<feature type="binding site" evidence="1">
    <location>
        <position position="235"/>
    </location>
    <ligand>
        <name>substrate</name>
    </ligand>
</feature>
<feature type="binding site" evidence="1">
    <location>
        <position position="264"/>
    </location>
    <ligand>
        <name>substrate</name>
    </ligand>
</feature>
<feature type="binding site" evidence="1">
    <location>
        <position position="293"/>
    </location>
    <ligand>
        <name>substrate</name>
    </ligand>
</feature>
<feature type="binding site" evidence="1">
    <location>
        <position position="329"/>
    </location>
    <ligand>
        <name>substrate</name>
    </ligand>
</feature>
<feature type="binding site" evidence="1">
    <location>
        <begin position="349"/>
        <end position="351"/>
    </location>
    <ligand>
        <name>substrate</name>
    </ligand>
</feature>
<feature type="binding site" evidence="1">
    <location>
        <begin position="390"/>
        <end position="393"/>
    </location>
    <ligand>
        <name>substrate</name>
    </ligand>
</feature>
<feature type="binding site" evidence="1">
    <location>
        <position position="429"/>
    </location>
    <ligand>
        <name>substrate</name>
    </ligand>
</feature>
<feature type="binding site" evidence="1">
    <location>
        <position position="433"/>
    </location>
    <ligand>
        <name>Zn(2+)</name>
        <dbReference type="ChEBI" id="CHEBI:29105"/>
    </ligand>
</feature>
<feature type="binding site" evidence="1">
    <location>
        <position position="456"/>
    </location>
    <ligand>
        <name>substrate</name>
    </ligand>
</feature>
<feature type="binding site" evidence="1">
    <location>
        <position position="497"/>
    </location>
    <ligand>
        <name>Zn(2+)</name>
        <dbReference type="ChEBI" id="CHEBI:29105"/>
    </ligand>
</feature>
<feature type="binding site" evidence="1">
    <location>
        <position position="577"/>
    </location>
    <ligand>
        <name>[4Fe-4S] cluster</name>
        <dbReference type="ChEBI" id="CHEBI:49883"/>
        <note>4Fe-4S-S-AdoMet</note>
    </ligand>
</feature>
<feature type="binding site" evidence="1">
    <location>
        <position position="580"/>
    </location>
    <ligand>
        <name>[4Fe-4S] cluster</name>
        <dbReference type="ChEBI" id="CHEBI:49883"/>
        <note>4Fe-4S-S-AdoMet</note>
    </ligand>
</feature>
<feature type="binding site" evidence="1">
    <location>
        <position position="585"/>
    </location>
    <ligand>
        <name>[4Fe-4S] cluster</name>
        <dbReference type="ChEBI" id="CHEBI:49883"/>
        <note>4Fe-4S-S-AdoMet</note>
    </ligand>
</feature>
<name>THIC_VIBVU</name>
<evidence type="ECO:0000255" key="1">
    <source>
        <dbReference type="HAMAP-Rule" id="MF_00089"/>
    </source>
</evidence>
<evidence type="ECO:0000256" key="2">
    <source>
        <dbReference type="SAM" id="MobiDB-lite"/>
    </source>
</evidence>
<comment type="function">
    <text evidence="1">Catalyzes the synthesis of the hydroxymethylpyrimidine phosphate (HMP-P) moiety of thiamine from aminoimidazole ribotide (AIR) in a radical S-adenosyl-L-methionine (SAM)-dependent reaction.</text>
</comment>
<comment type="catalytic activity">
    <reaction evidence="1">
        <text>5-amino-1-(5-phospho-beta-D-ribosyl)imidazole + S-adenosyl-L-methionine = 4-amino-2-methyl-5-(phosphooxymethyl)pyrimidine + CO + 5'-deoxyadenosine + formate + L-methionine + 3 H(+)</text>
        <dbReference type="Rhea" id="RHEA:24840"/>
        <dbReference type="ChEBI" id="CHEBI:15378"/>
        <dbReference type="ChEBI" id="CHEBI:15740"/>
        <dbReference type="ChEBI" id="CHEBI:17245"/>
        <dbReference type="ChEBI" id="CHEBI:17319"/>
        <dbReference type="ChEBI" id="CHEBI:57844"/>
        <dbReference type="ChEBI" id="CHEBI:58354"/>
        <dbReference type="ChEBI" id="CHEBI:59789"/>
        <dbReference type="ChEBI" id="CHEBI:137981"/>
        <dbReference type="EC" id="4.1.99.17"/>
    </reaction>
</comment>
<comment type="cofactor">
    <cofactor evidence="1">
        <name>[4Fe-4S] cluster</name>
        <dbReference type="ChEBI" id="CHEBI:49883"/>
    </cofactor>
    <text evidence="1">Binds 1 [4Fe-4S] cluster per subunit. The cluster is coordinated with 3 cysteines and an exchangeable S-adenosyl-L-methionine.</text>
</comment>
<comment type="pathway">
    <text evidence="1">Cofactor biosynthesis; thiamine diphosphate biosynthesis.</text>
</comment>
<comment type="subunit">
    <text evidence="1">Homodimer.</text>
</comment>
<comment type="similarity">
    <text evidence="1">Belongs to the ThiC family.</text>
</comment>
<accession>Q8DDL4</accession>
<proteinExistence type="inferred from homology"/>
<dbReference type="EC" id="4.1.99.17" evidence="1"/>
<dbReference type="EMBL" id="AE016795">
    <property type="protein sequence ID" value="AAO09458.1"/>
    <property type="molecule type" value="Genomic_DNA"/>
</dbReference>
<dbReference type="RefSeq" id="WP_011079010.1">
    <property type="nucleotide sequence ID" value="NC_004459.3"/>
</dbReference>
<dbReference type="SMR" id="Q8DDL4"/>
<dbReference type="KEGG" id="vvu:VV1_0964"/>
<dbReference type="HOGENOM" id="CLU_013181_2_1_6"/>
<dbReference type="UniPathway" id="UPA00060"/>
<dbReference type="Proteomes" id="UP000002275">
    <property type="component" value="Chromosome 1"/>
</dbReference>
<dbReference type="GO" id="GO:0005829">
    <property type="term" value="C:cytosol"/>
    <property type="evidence" value="ECO:0007669"/>
    <property type="project" value="TreeGrafter"/>
</dbReference>
<dbReference type="GO" id="GO:0051539">
    <property type="term" value="F:4 iron, 4 sulfur cluster binding"/>
    <property type="evidence" value="ECO:0007669"/>
    <property type="project" value="UniProtKB-KW"/>
</dbReference>
<dbReference type="GO" id="GO:0016830">
    <property type="term" value="F:carbon-carbon lyase activity"/>
    <property type="evidence" value="ECO:0007669"/>
    <property type="project" value="InterPro"/>
</dbReference>
<dbReference type="GO" id="GO:0008270">
    <property type="term" value="F:zinc ion binding"/>
    <property type="evidence" value="ECO:0007669"/>
    <property type="project" value="UniProtKB-UniRule"/>
</dbReference>
<dbReference type="GO" id="GO:0009228">
    <property type="term" value="P:thiamine biosynthetic process"/>
    <property type="evidence" value="ECO:0007669"/>
    <property type="project" value="UniProtKB-KW"/>
</dbReference>
<dbReference type="GO" id="GO:0009229">
    <property type="term" value="P:thiamine diphosphate biosynthetic process"/>
    <property type="evidence" value="ECO:0007669"/>
    <property type="project" value="UniProtKB-UniRule"/>
</dbReference>
<dbReference type="FunFam" id="3.20.20.540:FF:000001">
    <property type="entry name" value="Phosphomethylpyrimidine synthase"/>
    <property type="match status" value="1"/>
</dbReference>
<dbReference type="Gene3D" id="6.10.250.620">
    <property type="match status" value="1"/>
</dbReference>
<dbReference type="Gene3D" id="3.20.20.540">
    <property type="entry name" value="Radical SAM ThiC family, central domain"/>
    <property type="match status" value="1"/>
</dbReference>
<dbReference type="HAMAP" id="MF_00089">
    <property type="entry name" value="ThiC"/>
    <property type="match status" value="1"/>
</dbReference>
<dbReference type="InterPro" id="IPR037509">
    <property type="entry name" value="ThiC"/>
</dbReference>
<dbReference type="InterPro" id="IPR025747">
    <property type="entry name" value="ThiC-associated_dom"/>
</dbReference>
<dbReference type="InterPro" id="IPR038521">
    <property type="entry name" value="ThiC/Bza_core_dom"/>
</dbReference>
<dbReference type="InterPro" id="IPR002817">
    <property type="entry name" value="ThiC/BzaA/B"/>
</dbReference>
<dbReference type="NCBIfam" id="NF006763">
    <property type="entry name" value="PRK09284.1"/>
    <property type="match status" value="1"/>
</dbReference>
<dbReference type="NCBIfam" id="NF009895">
    <property type="entry name" value="PRK13352.1"/>
    <property type="match status" value="1"/>
</dbReference>
<dbReference type="NCBIfam" id="TIGR00190">
    <property type="entry name" value="thiC"/>
    <property type="match status" value="1"/>
</dbReference>
<dbReference type="PANTHER" id="PTHR30557:SF1">
    <property type="entry name" value="PHOSPHOMETHYLPYRIMIDINE SYNTHASE, CHLOROPLASTIC"/>
    <property type="match status" value="1"/>
</dbReference>
<dbReference type="PANTHER" id="PTHR30557">
    <property type="entry name" value="THIAMINE BIOSYNTHESIS PROTEIN THIC"/>
    <property type="match status" value="1"/>
</dbReference>
<dbReference type="Pfam" id="PF13667">
    <property type="entry name" value="ThiC-associated"/>
    <property type="match status" value="1"/>
</dbReference>
<dbReference type="Pfam" id="PF01964">
    <property type="entry name" value="ThiC_Rad_SAM"/>
    <property type="match status" value="1"/>
</dbReference>
<dbReference type="SFLD" id="SFLDF00407">
    <property type="entry name" value="phosphomethylpyrimidine_syntha"/>
    <property type="match status" value="1"/>
</dbReference>
<dbReference type="SFLD" id="SFLDG01114">
    <property type="entry name" value="phosphomethylpyrimidine_syntha"/>
    <property type="match status" value="1"/>
</dbReference>
<dbReference type="SFLD" id="SFLDS00113">
    <property type="entry name" value="Radical_SAM_Phosphomethylpyrim"/>
    <property type="match status" value="1"/>
</dbReference>
<sequence>MSNRKQARLEAKQFIDTLSVQPYPNSTKVYVEGSRSDIRVPMREISLADSLVGGTKEAPIFQPNEAVRVYDTSGVYTDPTHQIDLYNGLPKLREEWIAERADTEVLDDVSSVYTKERLEDETLDELRYGNLPRIRRAKAGYCVTQLHYARKGIITPEMEYIALRENMGRAKYQDEVLTQQHAGQSFGANLPKEITPEFVRREVAEGRAIIPSNINHPESEPMIIGRNFLVKVNANIGNSSVTSSIEEEVEKLVWSTRWGGDTVMDLSTGRNIHETREWILRNSPVPIGTVPMYQALEKVNGVAENLTWEVMRDTLIEQAEQGVDYFTIHAGLLLRYIPMTAKRVTGIVSRGGSIIAKWCLAHHQESFLYTHFREICEICAKYDVALSLGDGLRPGSIADANDEAQFAELRTLGELTKIAWEYDVQVIIEGPGHVPMHMIKENMDEQLKHCHEAPFYTLGPLTTDIAPGYDHITSGIGAAMIGWYGCAMLCYVTPKEHLGLPNKEDVKTGLITYKLAAHAADLAKGHPGAQVRDNALSKARFEFRWQDQFNLSLDPDTARAFHDETLPQESGKVAHFCSMCGPKFCSMKISQEVREYAKGQQGEAGQAIEVKLLDDPLEGMKQKSAEFKASGSELYHPAVSHEEVAEG</sequence>